<sequence>MNRSLYRTRIKFCGMTRAGDIRLAGELGVDAVGFIFAHGSPRRVAPAEARAMRQATAPMVDVVALFRNNSKEEVREVVRTVRPTLLQFHGEEDDAFCRSFNLPYLKAVPMGSSGVNGEDANARTLQLSYPNTAGFLFDSHAPGAGGGTGKTFDWSRLPTGLHRPFLLAGGINADNVFDAIVATLPWGVDVSSGVELAPGIKDGHKMRKFVEEVRRADCHDMS</sequence>
<gene>
    <name evidence="1" type="primary">trpF</name>
    <name type="ordered locus">XCV2871</name>
</gene>
<comment type="catalytic activity">
    <reaction evidence="1">
        <text>N-(5-phospho-beta-D-ribosyl)anthranilate = 1-(2-carboxyphenylamino)-1-deoxy-D-ribulose 5-phosphate</text>
        <dbReference type="Rhea" id="RHEA:21540"/>
        <dbReference type="ChEBI" id="CHEBI:18277"/>
        <dbReference type="ChEBI" id="CHEBI:58613"/>
        <dbReference type="EC" id="5.3.1.24"/>
    </reaction>
</comment>
<comment type="pathway">
    <text evidence="1">Amino-acid biosynthesis; L-tryptophan biosynthesis; L-tryptophan from chorismate: step 3/5.</text>
</comment>
<comment type="similarity">
    <text evidence="1">Belongs to the TrpF family.</text>
</comment>
<proteinExistence type="inferred from homology"/>
<keyword id="KW-0028">Amino-acid biosynthesis</keyword>
<keyword id="KW-0057">Aromatic amino acid biosynthesis</keyword>
<keyword id="KW-0413">Isomerase</keyword>
<keyword id="KW-0822">Tryptophan biosynthesis</keyword>
<name>TRPF_XANE5</name>
<reference key="1">
    <citation type="journal article" date="2005" name="J. Bacteriol.">
        <title>Insights into genome plasticity and pathogenicity of the plant pathogenic Bacterium Xanthomonas campestris pv. vesicatoria revealed by the complete genome sequence.</title>
        <authorList>
            <person name="Thieme F."/>
            <person name="Koebnik R."/>
            <person name="Bekel T."/>
            <person name="Berger C."/>
            <person name="Boch J."/>
            <person name="Buettner D."/>
            <person name="Caldana C."/>
            <person name="Gaigalat L."/>
            <person name="Goesmann A."/>
            <person name="Kay S."/>
            <person name="Kirchner O."/>
            <person name="Lanz C."/>
            <person name="Linke B."/>
            <person name="McHardy A.C."/>
            <person name="Meyer F."/>
            <person name="Mittenhuber G."/>
            <person name="Nies D.H."/>
            <person name="Niesbach-Kloesgen U."/>
            <person name="Patschkowski T."/>
            <person name="Rueckert C."/>
            <person name="Rupp O."/>
            <person name="Schneiker S."/>
            <person name="Schuster S.C."/>
            <person name="Vorhoelter F.J."/>
            <person name="Weber E."/>
            <person name="Puehler A."/>
            <person name="Bonas U."/>
            <person name="Bartels D."/>
            <person name="Kaiser O."/>
        </authorList>
    </citation>
    <scope>NUCLEOTIDE SEQUENCE [LARGE SCALE GENOMIC DNA]</scope>
    <source>
        <strain>85-10</strain>
    </source>
</reference>
<feature type="chain" id="PRO_1000018648" description="N-(5'-phosphoribosyl)anthranilate isomerase">
    <location>
        <begin position="1"/>
        <end position="222"/>
    </location>
</feature>
<dbReference type="EC" id="5.3.1.24" evidence="1"/>
<dbReference type="EMBL" id="AM039952">
    <property type="protein sequence ID" value="CAJ24550.1"/>
    <property type="molecule type" value="Genomic_DNA"/>
</dbReference>
<dbReference type="RefSeq" id="WP_008570953.1">
    <property type="nucleotide sequence ID" value="NZ_CP017190.1"/>
</dbReference>
<dbReference type="SMR" id="Q3BRL1"/>
<dbReference type="STRING" id="456327.BJD11_08500"/>
<dbReference type="KEGG" id="xcv:XCV2871"/>
<dbReference type="eggNOG" id="COG0135">
    <property type="taxonomic scope" value="Bacteria"/>
</dbReference>
<dbReference type="HOGENOM" id="CLU_076364_2_0_6"/>
<dbReference type="UniPathway" id="UPA00035">
    <property type="reaction ID" value="UER00042"/>
</dbReference>
<dbReference type="Proteomes" id="UP000007069">
    <property type="component" value="Chromosome"/>
</dbReference>
<dbReference type="GO" id="GO:0004640">
    <property type="term" value="F:phosphoribosylanthranilate isomerase activity"/>
    <property type="evidence" value="ECO:0007669"/>
    <property type="project" value="UniProtKB-UniRule"/>
</dbReference>
<dbReference type="GO" id="GO:0000162">
    <property type="term" value="P:L-tryptophan biosynthetic process"/>
    <property type="evidence" value="ECO:0007669"/>
    <property type="project" value="UniProtKB-UniRule"/>
</dbReference>
<dbReference type="CDD" id="cd00405">
    <property type="entry name" value="PRAI"/>
    <property type="match status" value="1"/>
</dbReference>
<dbReference type="FunFam" id="3.20.20.70:FF:000176">
    <property type="entry name" value="N-(5'-phosphoribosyl)anthranilate isomerase"/>
    <property type="match status" value="1"/>
</dbReference>
<dbReference type="Gene3D" id="3.20.20.70">
    <property type="entry name" value="Aldolase class I"/>
    <property type="match status" value="1"/>
</dbReference>
<dbReference type="HAMAP" id="MF_00135">
    <property type="entry name" value="PRAI"/>
    <property type="match status" value="1"/>
</dbReference>
<dbReference type="InterPro" id="IPR013785">
    <property type="entry name" value="Aldolase_TIM"/>
</dbReference>
<dbReference type="InterPro" id="IPR001240">
    <property type="entry name" value="PRAI_dom"/>
</dbReference>
<dbReference type="InterPro" id="IPR011060">
    <property type="entry name" value="RibuloseP-bd_barrel"/>
</dbReference>
<dbReference type="InterPro" id="IPR044643">
    <property type="entry name" value="TrpF_fam"/>
</dbReference>
<dbReference type="NCBIfam" id="NF002296">
    <property type="entry name" value="PRK01222.1-2"/>
    <property type="match status" value="1"/>
</dbReference>
<dbReference type="NCBIfam" id="NF002298">
    <property type="entry name" value="PRK01222.1-4"/>
    <property type="match status" value="1"/>
</dbReference>
<dbReference type="PANTHER" id="PTHR42894">
    <property type="entry name" value="N-(5'-PHOSPHORIBOSYL)ANTHRANILATE ISOMERASE"/>
    <property type="match status" value="1"/>
</dbReference>
<dbReference type="PANTHER" id="PTHR42894:SF1">
    <property type="entry name" value="N-(5'-PHOSPHORIBOSYL)ANTHRANILATE ISOMERASE"/>
    <property type="match status" value="1"/>
</dbReference>
<dbReference type="Pfam" id="PF00697">
    <property type="entry name" value="PRAI"/>
    <property type="match status" value="1"/>
</dbReference>
<dbReference type="SUPFAM" id="SSF51366">
    <property type="entry name" value="Ribulose-phoshate binding barrel"/>
    <property type="match status" value="1"/>
</dbReference>
<protein>
    <recommendedName>
        <fullName evidence="1">N-(5'-phosphoribosyl)anthranilate isomerase</fullName>
        <shortName evidence="1">PRAI</shortName>
        <ecNumber evidence="1">5.3.1.24</ecNumber>
    </recommendedName>
</protein>
<evidence type="ECO:0000255" key="1">
    <source>
        <dbReference type="HAMAP-Rule" id="MF_00135"/>
    </source>
</evidence>
<organism>
    <name type="scientific">Xanthomonas euvesicatoria pv. vesicatoria (strain 85-10)</name>
    <name type="common">Xanthomonas campestris pv. vesicatoria</name>
    <dbReference type="NCBI Taxonomy" id="316273"/>
    <lineage>
        <taxon>Bacteria</taxon>
        <taxon>Pseudomonadati</taxon>
        <taxon>Pseudomonadota</taxon>
        <taxon>Gammaproteobacteria</taxon>
        <taxon>Lysobacterales</taxon>
        <taxon>Lysobacteraceae</taxon>
        <taxon>Xanthomonas</taxon>
    </lineage>
</organism>
<accession>Q3BRL1</accession>